<name>DAPD_CERS5</name>
<gene>
    <name evidence="1" type="primary">dapD</name>
    <name type="ordered locus">Rsph17025_0046</name>
</gene>
<evidence type="ECO:0000255" key="1">
    <source>
        <dbReference type="HAMAP-Rule" id="MF_00811"/>
    </source>
</evidence>
<dbReference type="EC" id="2.3.1.117" evidence="1"/>
<dbReference type="EMBL" id="CP000661">
    <property type="protein sequence ID" value="ABP68958.1"/>
    <property type="molecule type" value="Genomic_DNA"/>
</dbReference>
<dbReference type="SMR" id="A4WNJ4"/>
<dbReference type="STRING" id="349102.Rsph17025_0046"/>
<dbReference type="KEGG" id="rsq:Rsph17025_0046"/>
<dbReference type="eggNOG" id="COG2171">
    <property type="taxonomic scope" value="Bacteria"/>
</dbReference>
<dbReference type="HOGENOM" id="CLU_050859_0_1_5"/>
<dbReference type="BioCyc" id="RSPH349102:G1G8M-46-MONOMER"/>
<dbReference type="UniPathway" id="UPA00034">
    <property type="reaction ID" value="UER00019"/>
</dbReference>
<dbReference type="GO" id="GO:0005737">
    <property type="term" value="C:cytoplasm"/>
    <property type="evidence" value="ECO:0007669"/>
    <property type="project" value="UniProtKB-SubCell"/>
</dbReference>
<dbReference type="GO" id="GO:0008666">
    <property type="term" value="F:2,3,4,5-tetrahydropyridine-2,6-dicarboxylate N-succinyltransferase activity"/>
    <property type="evidence" value="ECO:0007669"/>
    <property type="project" value="UniProtKB-UniRule"/>
</dbReference>
<dbReference type="GO" id="GO:0016779">
    <property type="term" value="F:nucleotidyltransferase activity"/>
    <property type="evidence" value="ECO:0007669"/>
    <property type="project" value="TreeGrafter"/>
</dbReference>
<dbReference type="GO" id="GO:0019877">
    <property type="term" value="P:diaminopimelate biosynthetic process"/>
    <property type="evidence" value="ECO:0007669"/>
    <property type="project" value="UniProtKB-UniRule"/>
</dbReference>
<dbReference type="GO" id="GO:0009089">
    <property type="term" value="P:lysine biosynthetic process via diaminopimelate"/>
    <property type="evidence" value="ECO:0007669"/>
    <property type="project" value="UniProtKB-UniRule"/>
</dbReference>
<dbReference type="CDD" id="cd03350">
    <property type="entry name" value="LbH_THP_succinylT"/>
    <property type="match status" value="1"/>
</dbReference>
<dbReference type="Gene3D" id="2.160.10.10">
    <property type="entry name" value="Hexapeptide repeat proteins"/>
    <property type="match status" value="1"/>
</dbReference>
<dbReference type="Gene3D" id="1.10.166.10">
    <property type="entry name" value="Tetrahydrodipicolinate-N-succinyltransferase, N-terminal domain"/>
    <property type="match status" value="1"/>
</dbReference>
<dbReference type="HAMAP" id="MF_00811">
    <property type="entry name" value="DapD"/>
    <property type="match status" value="1"/>
</dbReference>
<dbReference type="InterPro" id="IPR005664">
    <property type="entry name" value="DapD_Trfase_Hexpep_rpt_fam"/>
</dbReference>
<dbReference type="InterPro" id="IPR001451">
    <property type="entry name" value="Hexapep"/>
</dbReference>
<dbReference type="InterPro" id="IPR018357">
    <property type="entry name" value="Hexapep_transf_CS"/>
</dbReference>
<dbReference type="InterPro" id="IPR023180">
    <property type="entry name" value="THP_succinylTrfase_dom1"/>
</dbReference>
<dbReference type="InterPro" id="IPR037133">
    <property type="entry name" value="THP_succinylTrfase_N_sf"/>
</dbReference>
<dbReference type="InterPro" id="IPR011004">
    <property type="entry name" value="Trimer_LpxA-like_sf"/>
</dbReference>
<dbReference type="NCBIfam" id="TIGR00965">
    <property type="entry name" value="dapD"/>
    <property type="match status" value="1"/>
</dbReference>
<dbReference type="NCBIfam" id="NF008808">
    <property type="entry name" value="PRK11830.1"/>
    <property type="match status" value="1"/>
</dbReference>
<dbReference type="PANTHER" id="PTHR19136:SF52">
    <property type="entry name" value="2,3,4,5-TETRAHYDROPYRIDINE-2,6-DICARBOXYLATE N-SUCCINYLTRANSFERASE"/>
    <property type="match status" value="1"/>
</dbReference>
<dbReference type="PANTHER" id="PTHR19136">
    <property type="entry name" value="MOLYBDENUM COFACTOR GUANYLYLTRANSFERASE"/>
    <property type="match status" value="1"/>
</dbReference>
<dbReference type="Pfam" id="PF14602">
    <property type="entry name" value="Hexapep_2"/>
    <property type="match status" value="1"/>
</dbReference>
<dbReference type="Pfam" id="PF14805">
    <property type="entry name" value="THDPS_N_2"/>
    <property type="match status" value="1"/>
</dbReference>
<dbReference type="SUPFAM" id="SSF51161">
    <property type="entry name" value="Trimeric LpxA-like enzymes"/>
    <property type="match status" value="1"/>
</dbReference>
<dbReference type="PROSITE" id="PS00101">
    <property type="entry name" value="HEXAPEP_TRANSFERASES"/>
    <property type="match status" value="1"/>
</dbReference>
<organism>
    <name type="scientific">Cereibacter sphaeroides (strain ATCC 17025 / ATH 2.4.3)</name>
    <name type="common">Rhodobacter sphaeroides</name>
    <dbReference type="NCBI Taxonomy" id="349102"/>
    <lineage>
        <taxon>Bacteria</taxon>
        <taxon>Pseudomonadati</taxon>
        <taxon>Pseudomonadota</taxon>
        <taxon>Alphaproteobacteria</taxon>
        <taxon>Rhodobacterales</taxon>
        <taxon>Paracoccaceae</taxon>
        <taxon>Cereibacter</taxon>
    </lineage>
</organism>
<sequence>MSYSALEAAIEAAWEARDTITPATKGEARDAVEATLEALDKGSLRVAEKRGADWHVNQWAKKAVLLGFRLKDMDVQTGGPQGGTWWDKVDSKFAQWGEAQWKAAGFRAVPNCIVRRSAYIAKGVVLMPSFVNLGAYVDEGTMVDTWATVGSCAQIGKNVHLSGGVGIGGVLEPMQAGPTIIEDNCFIGARSEVVEGCIVREGSVLGMGVFIGKSTKIVDRETGEVMYGEVPAGSVVVAGSMPSKGGVNLYCAVIVKRVDAQTRSKTSINELLRD</sequence>
<feature type="chain" id="PRO_1000047176" description="2,3,4,5-tetrahydropyridine-2,6-dicarboxylate N-succinyltransferase">
    <location>
        <begin position="1"/>
        <end position="274"/>
    </location>
</feature>
<feature type="binding site" evidence="1">
    <location>
        <position position="107"/>
    </location>
    <ligand>
        <name>substrate</name>
    </ligand>
</feature>
<feature type="binding site" evidence="1">
    <location>
        <position position="144"/>
    </location>
    <ligand>
        <name>substrate</name>
    </ligand>
</feature>
<accession>A4WNJ4</accession>
<protein>
    <recommendedName>
        <fullName evidence="1">2,3,4,5-tetrahydropyridine-2,6-dicarboxylate N-succinyltransferase</fullName>
        <ecNumber evidence="1">2.3.1.117</ecNumber>
    </recommendedName>
    <alternativeName>
        <fullName evidence="1">Tetrahydrodipicolinate N-succinyltransferase</fullName>
        <shortName evidence="1">THDP succinyltransferase</shortName>
        <shortName evidence="1">THP succinyltransferase</shortName>
        <shortName evidence="1">Tetrahydropicolinate succinylase</shortName>
    </alternativeName>
</protein>
<proteinExistence type="inferred from homology"/>
<comment type="catalytic activity">
    <reaction evidence="1">
        <text>(S)-2,3,4,5-tetrahydrodipicolinate + succinyl-CoA + H2O = (S)-2-succinylamino-6-oxoheptanedioate + CoA</text>
        <dbReference type="Rhea" id="RHEA:17325"/>
        <dbReference type="ChEBI" id="CHEBI:15377"/>
        <dbReference type="ChEBI" id="CHEBI:15685"/>
        <dbReference type="ChEBI" id="CHEBI:16845"/>
        <dbReference type="ChEBI" id="CHEBI:57287"/>
        <dbReference type="ChEBI" id="CHEBI:57292"/>
        <dbReference type="EC" id="2.3.1.117"/>
    </reaction>
</comment>
<comment type="pathway">
    <text evidence="1">Amino-acid biosynthesis; L-lysine biosynthesis via DAP pathway; LL-2,6-diaminopimelate from (S)-tetrahydrodipicolinate (succinylase route): step 1/3.</text>
</comment>
<comment type="subunit">
    <text evidence="1">Homotrimer.</text>
</comment>
<comment type="subcellular location">
    <subcellularLocation>
        <location evidence="1">Cytoplasm</location>
    </subcellularLocation>
</comment>
<comment type="similarity">
    <text evidence="1">Belongs to the transferase hexapeptide repeat family.</text>
</comment>
<keyword id="KW-0012">Acyltransferase</keyword>
<keyword id="KW-0028">Amino-acid biosynthesis</keyword>
<keyword id="KW-0963">Cytoplasm</keyword>
<keyword id="KW-0220">Diaminopimelate biosynthesis</keyword>
<keyword id="KW-0457">Lysine biosynthesis</keyword>
<keyword id="KW-0677">Repeat</keyword>
<keyword id="KW-0808">Transferase</keyword>
<reference key="1">
    <citation type="submission" date="2007-04" db="EMBL/GenBank/DDBJ databases">
        <title>Complete sequence of chromosome of Rhodobacter sphaeroides ATCC 17025.</title>
        <authorList>
            <consortium name="US DOE Joint Genome Institute"/>
            <person name="Copeland A."/>
            <person name="Lucas S."/>
            <person name="Lapidus A."/>
            <person name="Barry K."/>
            <person name="Detter J.C."/>
            <person name="Glavina del Rio T."/>
            <person name="Hammon N."/>
            <person name="Israni S."/>
            <person name="Dalin E."/>
            <person name="Tice H."/>
            <person name="Pitluck S."/>
            <person name="Chertkov O."/>
            <person name="Brettin T."/>
            <person name="Bruce D."/>
            <person name="Han C."/>
            <person name="Schmutz J."/>
            <person name="Larimer F."/>
            <person name="Land M."/>
            <person name="Hauser L."/>
            <person name="Kyrpides N."/>
            <person name="Kim E."/>
            <person name="Richardson P."/>
            <person name="Mackenzie C."/>
            <person name="Choudhary M."/>
            <person name="Donohue T.J."/>
            <person name="Kaplan S."/>
        </authorList>
    </citation>
    <scope>NUCLEOTIDE SEQUENCE [LARGE SCALE GENOMIC DNA]</scope>
    <source>
        <strain>ATCC 17025 / ATH 2.4.3</strain>
    </source>
</reference>